<feature type="chain" id="PRO_0000113910" description="Protein GrpE">
    <location>
        <begin position="1"/>
        <end position="209"/>
    </location>
</feature>
<feature type="region of interest" description="Disordered" evidence="2">
    <location>
        <begin position="1"/>
        <end position="63"/>
    </location>
</feature>
<feature type="compositionally biased region" description="Basic and acidic residues" evidence="2">
    <location>
        <begin position="7"/>
        <end position="42"/>
    </location>
</feature>
<feature type="compositionally biased region" description="Basic and acidic residues" evidence="2">
    <location>
        <begin position="50"/>
        <end position="63"/>
    </location>
</feature>
<name>GRPE_METMZ</name>
<gene>
    <name evidence="1" type="primary">grpE</name>
</gene>
<accession>P0CW10</accession>
<accession>P42367</accession>
<sequence length="209" mass="23995">MKKSRKKENMDSKERNQKEAERSEARNSESPAEKAGETKVSPENEPSSPEAEKNPEEACREENEILKDQLFRLAADFDNFRKRTARQMEENRKSVLEQVLLDFVEVTDNFDRAIKSARTAEDMGPIVSGIEQLSKQFFSILEKYGLERVKCEKAGEFDPHRHEAIHHIETSEVPDNTIVEIYKEGYALNEKVVRPALVSVARSPEEAEK</sequence>
<keyword id="KW-0143">Chaperone</keyword>
<keyword id="KW-0963">Cytoplasm</keyword>
<keyword id="KW-0346">Stress response</keyword>
<reference key="1">
    <citation type="journal article" date="1994" name="J. Mol. Biol.">
        <title>Identification of a grpE heat-shock gene homolog in the archaeon Methanosarcina mazei.</title>
        <authorList>
            <person name="Conway de Macario E."/>
            <person name="Dugan C.B."/>
            <person name="Macario A.J.L."/>
        </authorList>
    </citation>
    <scope>NUCLEOTIDE SEQUENCE [GENOMIC DNA]</scope>
    <scope>INDUCTION</scope>
    <source>
        <strain>S-6</strain>
    </source>
</reference>
<comment type="function">
    <text evidence="1">Participates actively in the response to hyperosmotic and heat shock by preventing the aggregation of stress-denatured proteins, in association with DnaK and GrpE. It is the nucleotide exchange factor for DnaK and may function as a thermosensor. Unfolded proteins bind initially to DnaJ; upon interaction with the DnaJ-bound protein, DnaK hydrolyzes its bound ATP, resulting in the formation of a stable complex. GrpE releases ADP from DnaK; ATP binding to DnaK triggers the release of the substrate protein, thus completing the reaction cycle. Several rounds of ATP-dependent interactions between DnaJ, DnaK and GrpE are required for fully efficient folding.</text>
</comment>
<comment type="subunit">
    <text evidence="1">Homodimer.</text>
</comment>
<comment type="subcellular location">
    <subcellularLocation>
        <location evidence="1">Cytoplasm</location>
    </subcellularLocation>
</comment>
<comment type="induction">
    <text evidence="3">By heat shock.</text>
</comment>
<comment type="similarity">
    <text evidence="1">Belongs to the GrpE family.</text>
</comment>
<dbReference type="EMBL" id="X74353">
    <property type="protein sequence ID" value="CAA52395.1"/>
    <property type="molecule type" value="Genomic_DNA"/>
</dbReference>
<dbReference type="PIR" id="S46379">
    <property type="entry name" value="S46379"/>
</dbReference>
<dbReference type="RefSeq" id="WP_048038245.1">
    <property type="nucleotide sequence ID" value="NZ_JJRB01000013.1"/>
</dbReference>
<dbReference type="SMR" id="P0CW10"/>
<dbReference type="GeneID" id="82161583"/>
<dbReference type="OMA" id="QGPVIRD"/>
<dbReference type="OrthoDB" id="372230at2157"/>
<dbReference type="GO" id="GO:0005737">
    <property type="term" value="C:cytoplasm"/>
    <property type="evidence" value="ECO:0007669"/>
    <property type="project" value="UniProtKB-SubCell"/>
</dbReference>
<dbReference type="GO" id="GO:0000774">
    <property type="term" value="F:adenyl-nucleotide exchange factor activity"/>
    <property type="evidence" value="ECO:0007669"/>
    <property type="project" value="InterPro"/>
</dbReference>
<dbReference type="GO" id="GO:0042803">
    <property type="term" value="F:protein homodimerization activity"/>
    <property type="evidence" value="ECO:0007669"/>
    <property type="project" value="InterPro"/>
</dbReference>
<dbReference type="GO" id="GO:0051087">
    <property type="term" value="F:protein-folding chaperone binding"/>
    <property type="evidence" value="ECO:0007669"/>
    <property type="project" value="InterPro"/>
</dbReference>
<dbReference type="GO" id="GO:0051082">
    <property type="term" value="F:unfolded protein binding"/>
    <property type="evidence" value="ECO:0007669"/>
    <property type="project" value="TreeGrafter"/>
</dbReference>
<dbReference type="GO" id="GO:0006457">
    <property type="term" value="P:protein folding"/>
    <property type="evidence" value="ECO:0007669"/>
    <property type="project" value="InterPro"/>
</dbReference>
<dbReference type="CDD" id="cd00446">
    <property type="entry name" value="GrpE"/>
    <property type="match status" value="1"/>
</dbReference>
<dbReference type="FunFam" id="2.30.22.10:FF:000001">
    <property type="entry name" value="Protein GrpE"/>
    <property type="match status" value="1"/>
</dbReference>
<dbReference type="Gene3D" id="3.90.20.20">
    <property type="match status" value="1"/>
</dbReference>
<dbReference type="Gene3D" id="2.30.22.10">
    <property type="entry name" value="Head domain of nucleotide exchange factor GrpE"/>
    <property type="match status" value="1"/>
</dbReference>
<dbReference type="HAMAP" id="MF_01151">
    <property type="entry name" value="GrpE"/>
    <property type="match status" value="1"/>
</dbReference>
<dbReference type="InterPro" id="IPR000740">
    <property type="entry name" value="GrpE"/>
</dbReference>
<dbReference type="InterPro" id="IPR013805">
    <property type="entry name" value="GrpE_coiled_coil"/>
</dbReference>
<dbReference type="InterPro" id="IPR009012">
    <property type="entry name" value="GrpE_head"/>
</dbReference>
<dbReference type="NCBIfam" id="NF010750">
    <property type="entry name" value="PRK14153.1"/>
    <property type="match status" value="1"/>
</dbReference>
<dbReference type="PANTHER" id="PTHR21237">
    <property type="entry name" value="GRPE PROTEIN"/>
    <property type="match status" value="1"/>
</dbReference>
<dbReference type="PANTHER" id="PTHR21237:SF23">
    <property type="entry name" value="GRPE PROTEIN HOMOLOG, MITOCHONDRIAL"/>
    <property type="match status" value="1"/>
</dbReference>
<dbReference type="Pfam" id="PF01025">
    <property type="entry name" value="GrpE"/>
    <property type="match status" value="1"/>
</dbReference>
<dbReference type="PRINTS" id="PR00773">
    <property type="entry name" value="GRPEPROTEIN"/>
</dbReference>
<dbReference type="SUPFAM" id="SSF58014">
    <property type="entry name" value="Coiled-coil domain of nucleotide exchange factor GrpE"/>
    <property type="match status" value="1"/>
</dbReference>
<dbReference type="SUPFAM" id="SSF51064">
    <property type="entry name" value="Head domain of nucleotide exchange factor GrpE"/>
    <property type="match status" value="1"/>
</dbReference>
<dbReference type="PROSITE" id="PS01071">
    <property type="entry name" value="GRPE"/>
    <property type="match status" value="1"/>
</dbReference>
<protein>
    <recommendedName>
        <fullName evidence="1">Protein GrpE</fullName>
    </recommendedName>
    <alternativeName>
        <fullName evidence="1">HSP-70 cofactor</fullName>
    </alternativeName>
</protein>
<evidence type="ECO:0000255" key="1">
    <source>
        <dbReference type="HAMAP-Rule" id="MF_01151"/>
    </source>
</evidence>
<evidence type="ECO:0000256" key="2">
    <source>
        <dbReference type="SAM" id="MobiDB-lite"/>
    </source>
</evidence>
<evidence type="ECO:0000269" key="3">
    <source>
    </source>
</evidence>
<organism>
    <name type="scientific">Methanosarcina mazei</name>
    <name type="common">Methanosarcina frisia</name>
    <dbReference type="NCBI Taxonomy" id="2209"/>
    <lineage>
        <taxon>Archaea</taxon>
        <taxon>Methanobacteriati</taxon>
        <taxon>Methanobacteriota</taxon>
        <taxon>Stenosarchaea group</taxon>
        <taxon>Methanomicrobia</taxon>
        <taxon>Methanosarcinales</taxon>
        <taxon>Methanosarcinaceae</taxon>
        <taxon>Methanosarcina</taxon>
    </lineage>
</organism>
<proteinExistence type="evidence at transcript level"/>